<name>ACP_CAMJ8</name>
<proteinExistence type="inferred from homology"/>
<organism>
    <name type="scientific">Campylobacter jejuni subsp. jejuni serotype O:6 (strain 81116 / NCTC 11828)</name>
    <dbReference type="NCBI Taxonomy" id="407148"/>
    <lineage>
        <taxon>Bacteria</taxon>
        <taxon>Pseudomonadati</taxon>
        <taxon>Campylobacterota</taxon>
        <taxon>Epsilonproteobacteria</taxon>
        <taxon>Campylobacterales</taxon>
        <taxon>Campylobacteraceae</taxon>
        <taxon>Campylobacter</taxon>
    </lineage>
</organism>
<protein>
    <recommendedName>
        <fullName evidence="1">Acyl carrier protein</fullName>
        <shortName evidence="1">ACP</shortName>
    </recommendedName>
</protein>
<feature type="chain" id="PRO_1000073122" description="Acyl carrier protein">
    <location>
        <begin position="1"/>
        <end position="77"/>
    </location>
</feature>
<feature type="domain" description="Carrier" evidence="2">
    <location>
        <begin position="1"/>
        <end position="76"/>
    </location>
</feature>
<feature type="modified residue" description="O-(pantetheine 4'-phosphoryl)serine" evidence="2">
    <location>
        <position position="36"/>
    </location>
</feature>
<evidence type="ECO:0000255" key="1">
    <source>
        <dbReference type="HAMAP-Rule" id="MF_01217"/>
    </source>
</evidence>
<evidence type="ECO:0000255" key="2">
    <source>
        <dbReference type="PROSITE-ProRule" id="PRU00258"/>
    </source>
</evidence>
<accession>A8FKM8</accession>
<dbReference type="EMBL" id="CP000814">
    <property type="protein sequence ID" value="ABV52015.1"/>
    <property type="molecule type" value="Genomic_DNA"/>
</dbReference>
<dbReference type="RefSeq" id="WP_002854831.1">
    <property type="nucleotide sequence ID" value="NC_009839.1"/>
</dbReference>
<dbReference type="SMR" id="A8FKM8"/>
<dbReference type="KEGG" id="cju:C8J_0416"/>
<dbReference type="HOGENOM" id="CLU_108696_5_1_7"/>
<dbReference type="UniPathway" id="UPA00094"/>
<dbReference type="GO" id="GO:0005829">
    <property type="term" value="C:cytosol"/>
    <property type="evidence" value="ECO:0007669"/>
    <property type="project" value="TreeGrafter"/>
</dbReference>
<dbReference type="GO" id="GO:0016020">
    <property type="term" value="C:membrane"/>
    <property type="evidence" value="ECO:0007669"/>
    <property type="project" value="GOC"/>
</dbReference>
<dbReference type="GO" id="GO:0000035">
    <property type="term" value="F:acyl binding"/>
    <property type="evidence" value="ECO:0007669"/>
    <property type="project" value="TreeGrafter"/>
</dbReference>
<dbReference type="GO" id="GO:0000036">
    <property type="term" value="F:acyl carrier activity"/>
    <property type="evidence" value="ECO:0007669"/>
    <property type="project" value="UniProtKB-UniRule"/>
</dbReference>
<dbReference type="GO" id="GO:0009245">
    <property type="term" value="P:lipid A biosynthetic process"/>
    <property type="evidence" value="ECO:0007669"/>
    <property type="project" value="TreeGrafter"/>
</dbReference>
<dbReference type="Gene3D" id="1.10.1200.10">
    <property type="entry name" value="ACP-like"/>
    <property type="match status" value="1"/>
</dbReference>
<dbReference type="HAMAP" id="MF_01217">
    <property type="entry name" value="Acyl_carrier"/>
    <property type="match status" value="1"/>
</dbReference>
<dbReference type="InterPro" id="IPR003231">
    <property type="entry name" value="ACP"/>
</dbReference>
<dbReference type="InterPro" id="IPR036736">
    <property type="entry name" value="ACP-like_sf"/>
</dbReference>
<dbReference type="InterPro" id="IPR009081">
    <property type="entry name" value="PP-bd_ACP"/>
</dbReference>
<dbReference type="InterPro" id="IPR006162">
    <property type="entry name" value="Ppantetheine_attach_site"/>
</dbReference>
<dbReference type="NCBIfam" id="TIGR00517">
    <property type="entry name" value="acyl_carrier"/>
    <property type="match status" value="1"/>
</dbReference>
<dbReference type="NCBIfam" id="NF002148">
    <property type="entry name" value="PRK00982.1-2"/>
    <property type="match status" value="1"/>
</dbReference>
<dbReference type="NCBIfam" id="NF002150">
    <property type="entry name" value="PRK00982.1-4"/>
    <property type="match status" value="1"/>
</dbReference>
<dbReference type="PANTHER" id="PTHR20863">
    <property type="entry name" value="ACYL CARRIER PROTEIN"/>
    <property type="match status" value="1"/>
</dbReference>
<dbReference type="PANTHER" id="PTHR20863:SF76">
    <property type="entry name" value="CARRIER DOMAIN-CONTAINING PROTEIN"/>
    <property type="match status" value="1"/>
</dbReference>
<dbReference type="Pfam" id="PF00550">
    <property type="entry name" value="PP-binding"/>
    <property type="match status" value="1"/>
</dbReference>
<dbReference type="SUPFAM" id="SSF47336">
    <property type="entry name" value="ACP-like"/>
    <property type="match status" value="1"/>
</dbReference>
<dbReference type="PROSITE" id="PS50075">
    <property type="entry name" value="CARRIER"/>
    <property type="match status" value="1"/>
</dbReference>
<dbReference type="PROSITE" id="PS00012">
    <property type="entry name" value="PHOSPHOPANTETHEINE"/>
    <property type="match status" value="1"/>
</dbReference>
<reference key="1">
    <citation type="journal article" date="2007" name="J. Bacteriol.">
        <title>The complete genome sequence of Campylobacter jejuni strain 81116 (NCTC11828).</title>
        <authorList>
            <person name="Pearson B.M."/>
            <person name="Gaskin D.J.H."/>
            <person name="Segers R.P.A.M."/>
            <person name="Wells J.M."/>
            <person name="Nuijten P.J.M."/>
            <person name="van Vliet A.H.M."/>
        </authorList>
    </citation>
    <scope>NUCLEOTIDE SEQUENCE [LARGE SCALE GENOMIC DNA]</scope>
    <source>
        <strain>81116 / NCTC 11828</strain>
    </source>
</reference>
<sequence length="77" mass="8598">MATFDDVKAVVVEQLSIDADAVKMESKIIEDLGADSLDVVELIMALEEKFEVEIPDSDAEKLIKIEDVVNYIDNLKK</sequence>
<keyword id="KW-0963">Cytoplasm</keyword>
<keyword id="KW-0275">Fatty acid biosynthesis</keyword>
<keyword id="KW-0276">Fatty acid metabolism</keyword>
<keyword id="KW-0444">Lipid biosynthesis</keyword>
<keyword id="KW-0443">Lipid metabolism</keyword>
<keyword id="KW-0596">Phosphopantetheine</keyword>
<keyword id="KW-0597">Phosphoprotein</keyword>
<gene>
    <name evidence="1" type="primary">acpP</name>
    <name type="ordered locus">C8J_0416</name>
</gene>
<comment type="function">
    <text evidence="1">Carrier of the growing fatty acid chain in fatty acid biosynthesis.</text>
</comment>
<comment type="pathway">
    <text evidence="1">Lipid metabolism; fatty acid biosynthesis.</text>
</comment>
<comment type="subcellular location">
    <subcellularLocation>
        <location evidence="1">Cytoplasm</location>
    </subcellularLocation>
</comment>
<comment type="PTM">
    <text evidence="1">4'-phosphopantetheine is transferred from CoA to a specific serine of apo-ACP by AcpS. This modification is essential for activity because fatty acids are bound in thioester linkage to the sulfhydryl of the prosthetic group.</text>
</comment>
<comment type="similarity">
    <text evidence="1">Belongs to the acyl carrier protein (ACP) family.</text>
</comment>